<dbReference type="EC" id="1.97.1.12" evidence="2"/>
<dbReference type="EMBL" id="CP000111">
    <property type="protein sequence ID" value="ABB50761.1"/>
    <property type="molecule type" value="Genomic_DNA"/>
</dbReference>
<dbReference type="RefSeq" id="WP_011377242.1">
    <property type="nucleotide sequence ID" value="NC_007577.1"/>
</dbReference>
<dbReference type="SMR" id="Q318D4"/>
<dbReference type="STRING" id="74546.PMT9312_1700"/>
<dbReference type="KEGG" id="pmi:PMT9312_1700"/>
<dbReference type="eggNOG" id="COG1143">
    <property type="taxonomic scope" value="Bacteria"/>
</dbReference>
<dbReference type="HOGENOM" id="CLU_139698_8_0_3"/>
<dbReference type="OrthoDB" id="9804603at2"/>
<dbReference type="Proteomes" id="UP000002715">
    <property type="component" value="Chromosome"/>
</dbReference>
<dbReference type="GO" id="GO:0009522">
    <property type="term" value="C:photosystem I"/>
    <property type="evidence" value="ECO:0007669"/>
    <property type="project" value="UniProtKB-KW"/>
</dbReference>
<dbReference type="GO" id="GO:0031676">
    <property type="term" value="C:plasma membrane-derived thylakoid membrane"/>
    <property type="evidence" value="ECO:0007669"/>
    <property type="project" value="UniProtKB-SubCell"/>
</dbReference>
<dbReference type="GO" id="GO:0051539">
    <property type="term" value="F:4 iron, 4 sulfur cluster binding"/>
    <property type="evidence" value="ECO:0007669"/>
    <property type="project" value="UniProtKB-KW"/>
</dbReference>
<dbReference type="GO" id="GO:0009055">
    <property type="term" value="F:electron transfer activity"/>
    <property type="evidence" value="ECO:0007669"/>
    <property type="project" value="UniProtKB-UniRule"/>
</dbReference>
<dbReference type="GO" id="GO:0046872">
    <property type="term" value="F:metal ion binding"/>
    <property type="evidence" value="ECO:0007669"/>
    <property type="project" value="UniProtKB-KW"/>
</dbReference>
<dbReference type="GO" id="GO:0016491">
    <property type="term" value="F:oxidoreductase activity"/>
    <property type="evidence" value="ECO:0007669"/>
    <property type="project" value="UniProtKB-KW"/>
</dbReference>
<dbReference type="GO" id="GO:0009773">
    <property type="term" value="P:photosynthetic electron transport in photosystem I"/>
    <property type="evidence" value="ECO:0007669"/>
    <property type="project" value="InterPro"/>
</dbReference>
<dbReference type="FunFam" id="3.30.70.20:FF:000001">
    <property type="entry name" value="Photosystem I iron-sulfur center"/>
    <property type="match status" value="1"/>
</dbReference>
<dbReference type="Gene3D" id="3.30.70.20">
    <property type="match status" value="1"/>
</dbReference>
<dbReference type="HAMAP" id="MF_01303">
    <property type="entry name" value="PSI_PsaC"/>
    <property type="match status" value="1"/>
</dbReference>
<dbReference type="InterPro" id="IPR017896">
    <property type="entry name" value="4Fe4S_Fe-S-bd"/>
</dbReference>
<dbReference type="InterPro" id="IPR017900">
    <property type="entry name" value="4Fe4S_Fe_S_CS"/>
</dbReference>
<dbReference type="InterPro" id="IPR050157">
    <property type="entry name" value="PSI_iron-sulfur_center"/>
</dbReference>
<dbReference type="InterPro" id="IPR017491">
    <property type="entry name" value="PSI_PsaC"/>
</dbReference>
<dbReference type="NCBIfam" id="TIGR03048">
    <property type="entry name" value="PS_I_psaC"/>
    <property type="match status" value="1"/>
</dbReference>
<dbReference type="PANTHER" id="PTHR24960:SF79">
    <property type="entry name" value="PHOTOSYSTEM I IRON-SULFUR CENTER"/>
    <property type="match status" value="1"/>
</dbReference>
<dbReference type="PANTHER" id="PTHR24960">
    <property type="entry name" value="PHOTOSYSTEM I IRON-SULFUR CENTER-RELATED"/>
    <property type="match status" value="1"/>
</dbReference>
<dbReference type="Pfam" id="PF12838">
    <property type="entry name" value="Fer4_7"/>
    <property type="match status" value="1"/>
</dbReference>
<dbReference type="SUPFAM" id="SSF54862">
    <property type="entry name" value="4Fe-4S ferredoxins"/>
    <property type="match status" value="1"/>
</dbReference>
<dbReference type="PROSITE" id="PS00198">
    <property type="entry name" value="4FE4S_FER_1"/>
    <property type="match status" value="2"/>
</dbReference>
<dbReference type="PROSITE" id="PS51379">
    <property type="entry name" value="4FE4S_FER_2"/>
    <property type="match status" value="2"/>
</dbReference>
<evidence type="ECO:0000250" key="1"/>
<evidence type="ECO:0000255" key="2">
    <source>
        <dbReference type="HAMAP-Rule" id="MF_01303"/>
    </source>
</evidence>
<comment type="function">
    <text evidence="2">Apoprotein for the two 4Fe-4S centers FA and FB of photosystem I (PSI); essential for photochemical activity. FB is the terminal electron acceptor of PSI, donating electrons to ferredoxin. The C-terminus interacts with PsaA/B/D and helps assemble the protein into the PSI complex. Required for binding of PsaD and PsaE to PSI. PSI is a plastocyanin/cytochrome c6-ferredoxin oxidoreductase, converting photonic excitation into a charge separation, which transfers an electron from the donor P700 chlorophyll pair to the spectroscopically characterized acceptors A0, A1, FX, FA and FB in turn.</text>
</comment>
<comment type="catalytic activity">
    <reaction evidence="2">
        <text>reduced [plastocyanin] + hnu + oxidized [2Fe-2S]-[ferredoxin] = oxidized [plastocyanin] + reduced [2Fe-2S]-[ferredoxin]</text>
        <dbReference type="Rhea" id="RHEA:30407"/>
        <dbReference type="Rhea" id="RHEA-COMP:10000"/>
        <dbReference type="Rhea" id="RHEA-COMP:10001"/>
        <dbReference type="Rhea" id="RHEA-COMP:10039"/>
        <dbReference type="Rhea" id="RHEA-COMP:10040"/>
        <dbReference type="ChEBI" id="CHEBI:29036"/>
        <dbReference type="ChEBI" id="CHEBI:30212"/>
        <dbReference type="ChEBI" id="CHEBI:33737"/>
        <dbReference type="ChEBI" id="CHEBI:33738"/>
        <dbReference type="ChEBI" id="CHEBI:49552"/>
        <dbReference type="EC" id="1.97.1.12"/>
    </reaction>
</comment>
<comment type="cofactor">
    <cofactor evidence="2">
        <name>[4Fe-4S] cluster</name>
        <dbReference type="ChEBI" id="CHEBI:49883"/>
    </cofactor>
    <text evidence="2">Binds 2 [4Fe-4S] clusters. Cluster 2 is most probably the spectroscopically characterized electron acceptor FA and cluster 1 is most probably FB.</text>
</comment>
<comment type="subunit">
    <text evidence="2">The cyanobacterial PSI reaction center is composed of one copy each of PsaA,B,C,D,E,F,I,J,K,L,M and X, and forms trimeric complexes.</text>
</comment>
<comment type="subcellular location">
    <subcellularLocation>
        <location evidence="2">Cellular thylakoid membrane</location>
        <topology evidence="2">Peripheral membrane protein</topology>
        <orientation evidence="2">Cytoplasmic side</orientation>
    </subcellularLocation>
</comment>
<reference key="1">
    <citation type="journal article" date="2006" name="Science">
        <title>Genomic islands and the ecology and evolution of Prochlorococcus.</title>
        <authorList>
            <person name="Coleman M.L."/>
            <person name="Sullivan M.B."/>
            <person name="Martiny A.C."/>
            <person name="Steglich C."/>
            <person name="Barry K."/>
            <person name="Delong E.F."/>
            <person name="Chisholm S.W."/>
        </authorList>
    </citation>
    <scope>NUCLEOTIDE SEQUENCE [LARGE SCALE GENOMIC DNA]</scope>
    <source>
        <strain>MIT 9312</strain>
    </source>
</reference>
<protein>
    <recommendedName>
        <fullName evidence="2">Photosystem I iron-sulfur center</fullName>
        <ecNumber evidence="2">1.97.1.12</ecNumber>
    </recommendedName>
    <alternativeName>
        <fullName evidence="2">9 kDa polypeptide</fullName>
    </alternativeName>
    <alternativeName>
        <fullName evidence="2">PSI-C</fullName>
    </alternativeName>
    <alternativeName>
        <fullName evidence="2">Photosystem I subunit VII</fullName>
    </alternativeName>
    <alternativeName>
        <fullName evidence="2">PsaC</fullName>
    </alternativeName>
</protein>
<organism>
    <name type="scientific">Prochlorococcus marinus (strain MIT 9312)</name>
    <dbReference type="NCBI Taxonomy" id="74546"/>
    <lineage>
        <taxon>Bacteria</taxon>
        <taxon>Bacillati</taxon>
        <taxon>Cyanobacteriota</taxon>
        <taxon>Cyanophyceae</taxon>
        <taxon>Synechococcales</taxon>
        <taxon>Prochlorococcaceae</taxon>
        <taxon>Prochlorococcus</taxon>
    </lineage>
</organism>
<gene>
    <name evidence="2" type="primary">psaC</name>
    <name type="ordered locus">PMT9312_1700</name>
</gene>
<keyword id="KW-0004">4Fe-4S</keyword>
<keyword id="KW-0249">Electron transport</keyword>
<keyword id="KW-0408">Iron</keyword>
<keyword id="KW-0411">Iron-sulfur</keyword>
<keyword id="KW-0472">Membrane</keyword>
<keyword id="KW-0479">Metal-binding</keyword>
<keyword id="KW-0560">Oxidoreductase</keyword>
<keyword id="KW-0602">Photosynthesis</keyword>
<keyword id="KW-0603">Photosystem I</keyword>
<keyword id="KW-0677">Repeat</keyword>
<keyword id="KW-0793">Thylakoid</keyword>
<keyword id="KW-0813">Transport</keyword>
<accession>Q318D4</accession>
<proteinExistence type="inferred from homology"/>
<sequence length="81" mass="8842">MSHAVKIYDTCIGCTQCVRACPLDVLEMVPWDGCKAAQIASSPRTEDCVGCKRCETACPTDFLSIRVYLGDETSRSMGLAY</sequence>
<name>PSAC_PROM9</name>
<feature type="initiator methionine" description="Removed" evidence="1">
    <location>
        <position position="1"/>
    </location>
</feature>
<feature type="chain" id="PRO_0000292100" description="Photosystem I iron-sulfur center">
    <location>
        <begin position="2"/>
        <end position="81"/>
    </location>
</feature>
<feature type="domain" description="4Fe-4S ferredoxin-type 1" evidence="2">
    <location>
        <begin position="2"/>
        <end position="31"/>
    </location>
</feature>
<feature type="domain" description="4Fe-4S ferredoxin-type 2" evidence="2">
    <location>
        <begin position="39"/>
        <end position="68"/>
    </location>
</feature>
<feature type="binding site" evidence="2">
    <location>
        <position position="11"/>
    </location>
    <ligand>
        <name>[4Fe-4S] cluster</name>
        <dbReference type="ChEBI" id="CHEBI:49883"/>
        <label>1</label>
    </ligand>
</feature>
<feature type="binding site" evidence="2">
    <location>
        <position position="14"/>
    </location>
    <ligand>
        <name>[4Fe-4S] cluster</name>
        <dbReference type="ChEBI" id="CHEBI:49883"/>
        <label>1</label>
    </ligand>
</feature>
<feature type="binding site" evidence="2">
    <location>
        <position position="17"/>
    </location>
    <ligand>
        <name>[4Fe-4S] cluster</name>
        <dbReference type="ChEBI" id="CHEBI:49883"/>
        <label>1</label>
    </ligand>
</feature>
<feature type="binding site" evidence="2">
    <location>
        <position position="21"/>
    </location>
    <ligand>
        <name>[4Fe-4S] cluster</name>
        <dbReference type="ChEBI" id="CHEBI:49883"/>
        <label>2</label>
    </ligand>
</feature>
<feature type="binding site" evidence="2">
    <location>
        <position position="48"/>
    </location>
    <ligand>
        <name>[4Fe-4S] cluster</name>
        <dbReference type="ChEBI" id="CHEBI:49883"/>
        <label>2</label>
    </ligand>
</feature>
<feature type="binding site" evidence="2">
    <location>
        <position position="51"/>
    </location>
    <ligand>
        <name>[4Fe-4S] cluster</name>
        <dbReference type="ChEBI" id="CHEBI:49883"/>
        <label>2</label>
    </ligand>
</feature>
<feature type="binding site" evidence="2">
    <location>
        <position position="54"/>
    </location>
    <ligand>
        <name>[4Fe-4S] cluster</name>
        <dbReference type="ChEBI" id="CHEBI:49883"/>
        <label>2</label>
    </ligand>
</feature>
<feature type="binding site" evidence="2">
    <location>
        <position position="58"/>
    </location>
    <ligand>
        <name>[4Fe-4S] cluster</name>
        <dbReference type="ChEBI" id="CHEBI:49883"/>
        <label>1</label>
    </ligand>
</feature>